<evidence type="ECO:0000255" key="1">
    <source>
        <dbReference type="HAMAP-Rule" id="MF_01007"/>
    </source>
</evidence>
<protein>
    <recommendedName>
        <fullName evidence="1">Ribosomal RNA small subunit methyltransferase H</fullName>
        <ecNumber evidence="1">2.1.1.199</ecNumber>
    </recommendedName>
    <alternativeName>
        <fullName evidence="1">16S rRNA m(4)C1402 methyltransferase</fullName>
    </alternativeName>
    <alternativeName>
        <fullName evidence="1">rRNA (cytosine-N(4)-)-methyltransferase RsmH</fullName>
    </alternativeName>
</protein>
<feature type="chain" id="PRO_0000318874" description="Ribosomal RNA small subunit methyltransferase H">
    <location>
        <begin position="1"/>
        <end position="302"/>
    </location>
</feature>
<feature type="binding site" evidence="1">
    <location>
        <begin position="36"/>
        <end position="38"/>
    </location>
    <ligand>
        <name>S-adenosyl-L-methionine</name>
        <dbReference type="ChEBI" id="CHEBI:59789"/>
    </ligand>
</feature>
<feature type="binding site" evidence="1">
    <location>
        <position position="56"/>
    </location>
    <ligand>
        <name>S-adenosyl-L-methionine</name>
        <dbReference type="ChEBI" id="CHEBI:59789"/>
    </ligand>
</feature>
<feature type="binding site" evidence="1">
    <location>
        <position position="84"/>
    </location>
    <ligand>
        <name>S-adenosyl-L-methionine</name>
        <dbReference type="ChEBI" id="CHEBI:59789"/>
    </ligand>
</feature>
<feature type="binding site" evidence="1">
    <location>
        <position position="99"/>
    </location>
    <ligand>
        <name>S-adenosyl-L-methionine</name>
        <dbReference type="ChEBI" id="CHEBI:59789"/>
    </ligand>
</feature>
<feature type="binding site" evidence="1">
    <location>
        <position position="106"/>
    </location>
    <ligand>
        <name>S-adenosyl-L-methionine</name>
        <dbReference type="ChEBI" id="CHEBI:59789"/>
    </ligand>
</feature>
<sequence>MMILMEYHNPVLLKESVDGLDVKPDGIYVDVTFGGGGHSKEILKRLGPDGKLYAFDQDKDALENKIEDGRFTLINENFRYLKRFLRFYGIKKVDGVLGDFGVSSHQFNEAERGFSTRFDAKLDMRMNQGDKLSAYEVINEYEEEQLKKLFWAYADLKNAPKLARTIVSERKNNPIETSEQLNDLLKPLLFKGKENKILAQIYQAIRIEVNQEIEVLKEFLLQTEEILKPGGRLSLISYHSLEDRLVKRYIRSGLFEGEPEKDMYGNISVPFKKVNGLIIPSKEEIQQNNRARSAKLRVARKL</sequence>
<comment type="function">
    <text evidence="1">Specifically methylates the N4 position of cytidine in position 1402 (C1402) of 16S rRNA.</text>
</comment>
<comment type="catalytic activity">
    <reaction evidence="1">
        <text>cytidine(1402) in 16S rRNA + S-adenosyl-L-methionine = N(4)-methylcytidine(1402) in 16S rRNA + S-adenosyl-L-homocysteine + H(+)</text>
        <dbReference type="Rhea" id="RHEA:42928"/>
        <dbReference type="Rhea" id="RHEA-COMP:10286"/>
        <dbReference type="Rhea" id="RHEA-COMP:10287"/>
        <dbReference type="ChEBI" id="CHEBI:15378"/>
        <dbReference type="ChEBI" id="CHEBI:57856"/>
        <dbReference type="ChEBI" id="CHEBI:59789"/>
        <dbReference type="ChEBI" id="CHEBI:74506"/>
        <dbReference type="ChEBI" id="CHEBI:82748"/>
        <dbReference type="EC" id="2.1.1.199"/>
    </reaction>
</comment>
<comment type="subcellular location">
    <subcellularLocation>
        <location evidence="1">Cytoplasm</location>
    </subcellularLocation>
</comment>
<comment type="similarity">
    <text evidence="1">Belongs to the methyltransferase superfamily. RsmH family.</text>
</comment>
<keyword id="KW-0963">Cytoplasm</keyword>
<keyword id="KW-0489">Methyltransferase</keyword>
<keyword id="KW-0698">rRNA processing</keyword>
<keyword id="KW-0949">S-adenosyl-L-methionine</keyword>
<keyword id="KW-0808">Transferase</keyword>
<accession>A0M534</accession>
<proteinExistence type="inferred from homology"/>
<name>RSMH_CHRFK</name>
<reference key="1">
    <citation type="journal article" date="2006" name="Environ. Microbiol.">
        <title>Whole genome analysis of the marine Bacteroidetes'Gramella forsetii' reveals adaptations to degradation of polymeric organic matter.</title>
        <authorList>
            <person name="Bauer M."/>
            <person name="Kube M."/>
            <person name="Teeling H."/>
            <person name="Richter M."/>
            <person name="Lombardot T."/>
            <person name="Allers E."/>
            <person name="Wuerdemann C.A."/>
            <person name="Quast C."/>
            <person name="Kuhl H."/>
            <person name="Knaust F."/>
            <person name="Woebken D."/>
            <person name="Bischof K."/>
            <person name="Mussmann M."/>
            <person name="Choudhuri J.V."/>
            <person name="Meyer F."/>
            <person name="Reinhardt R."/>
            <person name="Amann R.I."/>
            <person name="Gloeckner F.O."/>
        </authorList>
    </citation>
    <scope>NUCLEOTIDE SEQUENCE [LARGE SCALE GENOMIC DNA]</scope>
    <source>
        <strain>DSM 17595 / CGMCC 1.15422 / KT0803</strain>
    </source>
</reference>
<gene>
    <name evidence="1" type="primary">rsmH</name>
    <name type="synonym">mraW</name>
    <name type="ordered locus">GFO_2775</name>
</gene>
<organism>
    <name type="scientific">Christiangramia forsetii (strain DSM 17595 / CGMCC 1.15422 / KT0803)</name>
    <name type="common">Gramella forsetii</name>
    <dbReference type="NCBI Taxonomy" id="411154"/>
    <lineage>
        <taxon>Bacteria</taxon>
        <taxon>Pseudomonadati</taxon>
        <taxon>Bacteroidota</taxon>
        <taxon>Flavobacteriia</taxon>
        <taxon>Flavobacteriales</taxon>
        <taxon>Flavobacteriaceae</taxon>
        <taxon>Christiangramia</taxon>
    </lineage>
</organism>
<dbReference type="EC" id="2.1.1.199" evidence="1"/>
<dbReference type="EMBL" id="CU207366">
    <property type="protein sequence ID" value="CAL67729.1"/>
    <property type="molecule type" value="Genomic_DNA"/>
</dbReference>
<dbReference type="SMR" id="A0M534"/>
<dbReference type="STRING" id="411154.GFO_2775"/>
<dbReference type="KEGG" id="gfo:GFO_2775"/>
<dbReference type="eggNOG" id="COG0275">
    <property type="taxonomic scope" value="Bacteria"/>
</dbReference>
<dbReference type="HOGENOM" id="CLU_038422_2_0_10"/>
<dbReference type="Proteomes" id="UP000000755">
    <property type="component" value="Chromosome"/>
</dbReference>
<dbReference type="GO" id="GO:0005737">
    <property type="term" value="C:cytoplasm"/>
    <property type="evidence" value="ECO:0007669"/>
    <property type="project" value="UniProtKB-SubCell"/>
</dbReference>
<dbReference type="GO" id="GO:0071424">
    <property type="term" value="F:rRNA (cytosine-N4-)-methyltransferase activity"/>
    <property type="evidence" value="ECO:0007669"/>
    <property type="project" value="UniProtKB-UniRule"/>
</dbReference>
<dbReference type="GO" id="GO:0070475">
    <property type="term" value="P:rRNA base methylation"/>
    <property type="evidence" value="ECO:0007669"/>
    <property type="project" value="UniProtKB-UniRule"/>
</dbReference>
<dbReference type="Gene3D" id="1.10.150.170">
    <property type="entry name" value="Putative methyltransferase TM0872, insert domain"/>
    <property type="match status" value="1"/>
</dbReference>
<dbReference type="Gene3D" id="3.40.50.150">
    <property type="entry name" value="Vaccinia Virus protein VP39"/>
    <property type="match status" value="1"/>
</dbReference>
<dbReference type="HAMAP" id="MF_01007">
    <property type="entry name" value="16SrRNA_methyltr_H"/>
    <property type="match status" value="1"/>
</dbReference>
<dbReference type="InterPro" id="IPR002903">
    <property type="entry name" value="RsmH"/>
</dbReference>
<dbReference type="InterPro" id="IPR023397">
    <property type="entry name" value="SAM-dep_MeTrfase_MraW_recog"/>
</dbReference>
<dbReference type="InterPro" id="IPR029063">
    <property type="entry name" value="SAM-dependent_MTases_sf"/>
</dbReference>
<dbReference type="NCBIfam" id="TIGR00006">
    <property type="entry name" value="16S rRNA (cytosine(1402)-N(4))-methyltransferase RsmH"/>
    <property type="match status" value="1"/>
</dbReference>
<dbReference type="PANTHER" id="PTHR11265:SF0">
    <property type="entry name" value="12S RRNA N4-METHYLCYTIDINE METHYLTRANSFERASE"/>
    <property type="match status" value="1"/>
</dbReference>
<dbReference type="PANTHER" id="PTHR11265">
    <property type="entry name" value="S-ADENOSYL-METHYLTRANSFERASE MRAW"/>
    <property type="match status" value="1"/>
</dbReference>
<dbReference type="Pfam" id="PF01795">
    <property type="entry name" value="Methyltransf_5"/>
    <property type="match status" value="1"/>
</dbReference>
<dbReference type="PIRSF" id="PIRSF004486">
    <property type="entry name" value="MraW"/>
    <property type="match status" value="1"/>
</dbReference>
<dbReference type="SUPFAM" id="SSF81799">
    <property type="entry name" value="Putative methyltransferase TM0872, insert domain"/>
    <property type="match status" value="1"/>
</dbReference>
<dbReference type="SUPFAM" id="SSF53335">
    <property type="entry name" value="S-adenosyl-L-methionine-dependent methyltransferases"/>
    <property type="match status" value="1"/>
</dbReference>